<proteinExistence type="evidence at protein level"/>
<comment type="function">
    <text evidence="4">Plays a role in the regulation of innate resistance to pathogens, inflammatory reactions, possibly clearance of self-components and female fertility.</text>
</comment>
<comment type="subunit">
    <text evidence="1 4">Homooctamer; disulfide-linked (By similarity). Binds to C1q.</text>
</comment>
<comment type="subcellular location">
    <subcellularLocation>
        <location>Secreted</location>
    </subcellularLocation>
</comment>
<gene>
    <name type="primary">Ptx3</name>
    <name type="synonym">Tsg14</name>
</gene>
<protein>
    <recommendedName>
        <fullName>Pentraxin-related protein PTX3</fullName>
    </recommendedName>
    <alternativeName>
        <fullName>Pentaxin-related protein PTX3</fullName>
    </alternativeName>
    <alternativeName>
        <fullName>Tumor necrosis factor-inducible gene 14 protein</fullName>
        <shortName>TSG-14</shortName>
    </alternativeName>
</protein>
<reference key="1">
    <citation type="journal article" date="1996" name="Blood">
        <title>Cloning of mouse ptx3, a new member of the pentraxin gene family expressed at extrahepatic sites.</title>
        <authorList>
            <person name="Introna M."/>
            <person name="Vidal Alles V."/>
            <person name="Castellano M."/>
            <person name="Picardi G."/>
            <person name="de Gioia L."/>
            <person name="Bottazzai B."/>
            <person name="Peri G."/>
            <person name="Breviario F."/>
            <person name="Salmona M."/>
            <person name="de Gregorio I."/>
            <person name="Dragani T.A."/>
            <person name="Srinivasan N."/>
            <person name="Blundell T.L."/>
            <person name="Hamilton T.A."/>
            <person name="Mantovani A."/>
        </authorList>
    </citation>
    <scope>NUCLEOTIDE SEQUENCE [MRNA]</scope>
    <source>
        <strain>C57BL/6J</strain>
        <tissue>Fibroblast</tissue>
    </source>
</reference>
<reference key="2">
    <citation type="journal article" date="2004" name="Genome Res.">
        <title>The status, quality, and expansion of the NIH full-length cDNA project: the Mammalian Gene Collection (MGC).</title>
        <authorList>
            <consortium name="The MGC Project Team"/>
        </authorList>
    </citation>
    <scope>NUCLEOTIDE SEQUENCE [LARGE SCALE MRNA]</scope>
    <source>
        <strain>Czech II</strain>
        <tissue>Mammary tumor</tissue>
    </source>
</reference>
<reference key="3">
    <citation type="journal article" date="1995" name="J. Biol. Chem.">
        <title>Promoter structure and transcriptional activation of the murine TSG-14 gene encoding a tumor necrosis factor/interleukin-1-inducible pentraxin protein.</title>
        <authorList>
            <person name="Altmeyer A."/>
            <person name="Klampfer L."/>
            <person name="Goodman A.R."/>
            <person name="Vilcek J."/>
        </authorList>
    </citation>
    <scope>NUCLEOTIDE SEQUENCE [GENOMIC DNA] OF 1-177</scope>
    <source>
        <strain>129/Sv</strain>
    </source>
</reference>
<reference key="4">
    <citation type="journal article" date="1997" name="J. Biol. Chem.">
        <title>Multimer formation and ligand recognition by the long pentraxin PTX3. Similarities and differences with the short pentraxins C-reactive protein and serum amyloid P component.</title>
        <authorList>
            <person name="Bottazzi B."/>
            <person name="Vouret-Craviari V."/>
            <person name="Bastone A."/>
            <person name="De Gioia L."/>
            <person name="Matteucci C."/>
            <person name="Peri G."/>
            <person name="Spreafico F."/>
            <person name="Pausa M."/>
            <person name="D'Ettorre C."/>
            <person name="Gianazza E."/>
            <person name="Tagliabue A."/>
            <person name="Salmona M."/>
            <person name="Tedesco F."/>
            <person name="Introna M."/>
            <person name="Mantovani A."/>
        </authorList>
    </citation>
    <scope>FUNCTION</scope>
    <scope>SUBUNIT</scope>
</reference>
<reference key="5">
    <citation type="journal article" date="2003" name="Vaccine">
        <title>Pentraxin 3, a non-redundant soluble pattern recognition receptor involved in innate immunity.</title>
        <authorList>
            <person name="Mantovani A."/>
            <person name="Garlanda C."/>
            <person name="Bottazzi B."/>
        </authorList>
    </citation>
    <scope>REVIEW</scope>
</reference>
<dbReference type="EMBL" id="X83601">
    <property type="protein sequence ID" value="CAA58580.1"/>
    <property type="molecule type" value="mRNA"/>
</dbReference>
<dbReference type="EMBL" id="BC022176">
    <property type="protein sequence ID" value="AAH22176.1"/>
    <property type="molecule type" value="mRNA"/>
</dbReference>
<dbReference type="EMBL" id="U33842">
    <property type="protein sequence ID" value="AAC52273.1"/>
    <property type="molecule type" value="Genomic_DNA"/>
</dbReference>
<dbReference type="CCDS" id="CCDS17392.1"/>
<dbReference type="RefSeq" id="NP_033013.3">
    <property type="nucleotide sequence ID" value="NM_008987.3"/>
</dbReference>
<dbReference type="SMR" id="P48759"/>
<dbReference type="BioGRID" id="202513">
    <property type="interactions" value="1"/>
</dbReference>
<dbReference type="FunCoup" id="P48759">
    <property type="interactions" value="324"/>
</dbReference>
<dbReference type="IntAct" id="P48759">
    <property type="interactions" value="1"/>
</dbReference>
<dbReference type="MINT" id="P48759"/>
<dbReference type="STRING" id="10090.ENSMUSP00000029421"/>
<dbReference type="GlyCosmos" id="P48759">
    <property type="glycosylation" value="1 site, No reported glycans"/>
</dbReference>
<dbReference type="GlyGen" id="P48759">
    <property type="glycosylation" value="2 sites"/>
</dbReference>
<dbReference type="PhosphoSitePlus" id="P48759"/>
<dbReference type="CPTAC" id="non-CPTAC-3871"/>
<dbReference type="PaxDb" id="10090-ENSMUSP00000029421"/>
<dbReference type="ProteomicsDB" id="291544"/>
<dbReference type="Pumba" id="P48759"/>
<dbReference type="Antibodypedia" id="33649">
    <property type="antibodies" value="480 antibodies from 37 providers"/>
</dbReference>
<dbReference type="DNASU" id="19288"/>
<dbReference type="Ensembl" id="ENSMUST00000029421.6">
    <property type="protein sequence ID" value="ENSMUSP00000029421.5"/>
    <property type="gene ID" value="ENSMUSG00000027832.6"/>
</dbReference>
<dbReference type="GeneID" id="19288"/>
<dbReference type="KEGG" id="mmu:19288"/>
<dbReference type="UCSC" id="uc008pla.1">
    <property type="organism name" value="mouse"/>
</dbReference>
<dbReference type="AGR" id="MGI:104641"/>
<dbReference type="CTD" id="5806"/>
<dbReference type="MGI" id="MGI:104641">
    <property type="gene designation" value="Ptx3"/>
</dbReference>
<dbReference type="VEuPathDB" id="HostDB:ENSMUSG00000027832"/>
<dbReference type="eggNOG" id="ENOG502QUBX">
    <property type="taxonomic scope" value="Eukaryota"/>
</dbReference>
<dbReference type="GeneTree" id="ENSGT01100000263515"/>
<dbReference type="HOGENOM" id="CLU_725544_0_0_1"/>
<dbReference type="InParanoid" id="P48759"/>
<dbReference type="OMA" id="ISCDCQR"/>
<dbReference type="OrthoDB" id="10009351at2759"/>
<dbReference type="PhylomeDB" id="P48759"/>
<dbReference type="TreeFam" id="TF330208"/>
<dbReference type="Reactome" id="R-MMU-6798695">
    <property type="pathway name" value="Neutrophil degranulation"/>
</dbReference>
<dbReference type="BioGRID-ORCS" id="19288">
    <property type="hits" value="1 hit in 76 CRISPR screens"/>
</dbReference>
<dbReference type="ChiTaRS" id="Ptx3">
    <property type="organism name" value="mouse"/>
</dbReference>
<dbReference type="PRO" id="PR:P48759"/>
<dbReference type="Proteomes" id="UP000000589">
    <property type="component" value="Chromosome 3"/>
</dbReference>
<dbReference type="RNAct" id="P48759">
    <property type="molecule type" value="protein"/>
</dbReference>
<dbReference type="Bgee" id="ENSMUSG00000027832">
    <property type="expression patterns" value="Expressed in stroma of bone marrow and 147 other cell types or tissues"/>
</dbReference>
<dbReference type="GO" id="GO:0031012">
    <property type="term" value="C:extracellular matrix"/>
    <property type="evidence" value="ECO:0000314"/>
    <property type="project" value="MGI"/>
</dbReference>
<dbReference type="GO" id="GO:0005615">
    <property type="term" value="C:extracellular space"/>
    <property type="evidence" value="ECO:0007005"/>
    <property type="project" value="BHF-UCL"/>
</dbReference>
<dbReference type="GO" id="GO:0001872">
    <property type="term" value="F:(1-&gt;3)-beta-D-glucan binding"/>
    <property type="evidence" value="ECO:0000315"/>
    <property type="project" value="MGI"/>
</dbReference>
<dbReference type="GO" id="GO:0001849">
    <property type="term" value="F:complement component C1q complex binding"/>
    <property type="evidence" value="ECO:0007669"/>
    <property type="project" value="Ensembl"/>
</dbReference>
<dbReference type="GO" id="GO:0042802">
    <property type="term" value="F:identical protein binding"/>
    <property type="evidence" value="ECO:0007669"/>
    <property type="project" value="Ensembl"/>
</dbReference>
<dbReference type="GO" id="GO:0046790">
    <property type="term" value="F:virion binding"/>
    <property type="evidence" value="ECO:0007669"/>
    <property type="project" value="Ensembl"/>
</dbReference>
<dbReference type="GO" id="GO:0030198">
    <property type="term" value="P:extracellular matrix organization"/>
    <property type="evidence" value="ECO:0000314"/>
    <property type="project" value="MGI"/>
</dbReference>
<dbReference type="GO" id="GO:0046597">
    <property type="term" value="P:host-mediated suppression of symbiont invasion"/>
    <property type="evidence" value="ECO:0007669"/>
    <property type="project" value="Ensembl"/>
</dbReference>
<dbReference type="GO" id="GO:0044871">
    <property type="term" value="P:negative regulation by host of viral glycoprotein metabolic process"/>
    <property type="evidence" value="ECO:0007669"/>
    <property type="project" value="Ensembl"/>
</dbReference>
<dbReference type="GO" id="GO:0008228">
    <property type="term" value="P:opsonization"/>
    <property type="evidence" value="ECO:0000315"/>
    <property type="project" value="MGI"/>
</dbReference>
<dbReference type="GO" id="GO:0001550">
    <property type="term" value="P:ovarian cumulus expansion"/>
    <property type="evidence" value="ECO:0000314"/>
    <property type="project" value="MGI"/>
</dbReference>
<dbReference type="GO" id="GO:0045429">
    <property type="term" value="P:positive regulation of nitric oxide biosynthetic process"/>
    <property type="evidence" value="ECO:0000315"/>
    <property type="project" value="MGI"/>
</dbReference>
<dbReference type="GO" id="GO:0050766">
    <property type="term" value="P:positive regulation of phagocytosis"/>
    <property type="evidence" value="ECO:0000315"/>
    <property type="project" value="MGI"/>
</dbReference>
<dbReference type="GO" id="GO:0001878">
    <property type="term" value="P:response to yeast"/>
    <property type="evidence" value="ECO:0000315"/>
    <property type="project" value="MGI"/>
</dbReference>
<dbReference type="FunFam" id="2.60.120.200:FF:000110">
    <property type="entry name" value="pentraxin-related protein PTX3"/>
    <property type="match status" value="1"/>
</dbReference>
<dbReference type="Gene3D" id="2.60.120.200">
    <property type="match status" value="1"/>
</dbReference>
<dbReference type="InterPro" id="IPR013320">
    <property type="entry name" value="ConA-like_dom_sf"/>
</dbReference>
<dbReference type="InterPro" id="IPR030476">
    <property type="entry name" value="Pentaxin_CS"/>
</dbReference>
<dbReference type="InterPro" id="IPR001759">
    <property type="entry name" value="Pentraxin-related"/>
</dbReference>
<dbReference type="InterPro" id="IPR042837">
    <property type="entry name" value="PTX3"/>
</dbReference>
<dbReference type="PANTHER" id="PTHR46943">
    <property type="entry name" value="PENTRAXIN-RELATED PROTEIN PTX3"/>
    <property type="match status" value="1"/>
</dbReference>
<dbReference type="PANTHER" id="PTHR46943:SF1">
    <property type="entry name" value="PENTRAXIN-RELATED PROTEIN PTX3"/>
    <property type="match status" value="1"/>
</dbReference>
<dbReference type="Pfam" id="PF00354">
    <property type="entry name" value="Pentaxin"/>
    <property type="match status" value="1"/>
</dbReference>
<dbReference type="PRINTS" id="PR00895">
    <property type="entry name" value="PENTAXIN"/>
</dbReference>
<dbReference type="SMART" id="SM00159">
    <property type="entry name" value="PTX"/>
    <property type="match status" value="1"/>
</dbReference>
<dbReference type="SUPFAM" id="SSF49899">
    <property type="entry name" value="Concanavalin A-like lectins/glucanases"/>
    <property type="match status" value="1"/>
</dbReference>
<dbReference type="PROSITE" id="PS00289">
    <property type="entry name" value="PTX_1"/>
    <property type="match status" value="1"/>
</dbReference>
<dbReference type="PROSITE" id="PS51828">
    <property type="entry name" value="PTX_2"/>
    <property type="match status" value="1"/>
</dbReference>
<organism>
    <name type="scientific">Mus musculus</name>
    <name type="common">Mouse</name>
    <dbReference type="NCBI Taxonomy" id="10090"/>
    <lineage>
        <taxon>Eukaryota</taxon>
        <taxon>Metazoa</taxon>
        <taxon>Chordata</taxon>
        <taxon>Craniata</taxon>
        <taxon>Vertebrata</taxon>
        <taxon>Euteleostomi</taxon>
        <taxon>Mammalia</taxon>
        <taxon>Eutheria</taxon>
        <taxon>Euarchontoglires</taxon>
        <taxon>Glires</taxon>
        <taxon>Rodentia</taxon>
        <taxon>Myomorpha</taxon>
        <taxon>Muroidea</taxon>
        <taxon>Muridae</taxon>
        <taxon>Murinae</taxon>
        <taxon>Mus</taxon>
        <taxon>Mus</taxon>
    </lineage>
</organism>
<name>PTX3_MOUSE</name>
<keyword id="KW-1015">Disulfide bond</keyword>
<keyword id="KW-0325">Glycoprotein</keyword>
<keyword id="KW-1185">Reference proteome</keyword>
<keyword id="KW-0964">Secreted</keyword>
<keyword id="KW-0732">Signal</keyword>
<feature type="signal peptide" evidence="2">
    <location>
        <begin position="1"/>
        <end position="17"/>
    </location>
</feature>
<feature type="chain" id="PRO_0000023546" description="Pentraxin-related protein PTX3">
    <location>
        <begin position="18"/>
        <end position="381"/>
    </location>
</feature>
<feature type="domain" description="Pentraxin (PTX)" evidence="3">
    <location>
        <begin position="179"/>
        <end position="381"/>
    </location>
</feature>
<feature type="glycosylation site" description="N-linked (GlcNAc...) asparagine" evidence="2">
    <location>
        <position position="220"/>
    </location>
</feature>
<feature type="disulfide bond" description="Interchain" evidence="1">
    <location>
        <position position="47"/>
    </location>
</feature>
<feature type="disulfide bond" description="Interchain" evidence="1">
    <location>
        <position position="49"/>
    </location>
</feature>
<feature type="disulfide bond" description="Interchain" evidence="1">
    <location>
        <position position="103"/>
    </location>
</feature>
<feature type="disulfide bond" evidence="1">
    <location>
        <begin position="179"/>
        <end position="357"/>
    </location>
</feature>
<feature type="disulfide bond" evidence="3">
    <location>
        <begin position="210"/>
        <end position="271"/>
    </location>
</feature>
<feature type="disulfide bond" description="Interchain" evidence="1">
    <location>
        <position position="317"/>
    </location>
</feature>
<feature type="disulfide bond" description="Interchain" evidence="1">
    <location>
        <position position="318"/>
    </location>
</feature>
<feature type="sequence conflict" description="In Ref. 3; AAC52273." evidence="5" ref="3">
    <original>R</original>
    <variation>A</variation>
    <location>
        <position position="50"/>
    </location>
</feature>
<feature type="sequence conflict" description="In Ref. 3; AAC52273." evidence="5" ref="3">
    <original>A</original>
    <variation>S</variation>
    <location>
        <position position="90"/>
    </location>
</feature>
<feature type="sequence conflict" description="In Ref. 2; AAH22176." evidence="5" ref="2">
    <original>L</original>
    <variation>R</variation>
    <location>
        <position position="129"/>
    </location>
</feature>
<feature type="sequence conflict" description="In Ref. 2; AAH22176." evidence="5" ref="2">
    <original>P</original>
    <variation>S</variation>
    <location>
        <position position="142"/>
    </location>
</feature>
<feature type="sequence conflict" description="In Ref. 2; AAH22176." evidence="5" ref="2">
    <original>P</original>
    <variation>S</variation>
    <location>
        <position position="147"/>
    </location>
</feature>
<feature type="sequence conflict" description="In Ref. 3; AAC52273." evidence="5" ref="3">
    <original>A</original>
    <variation>S</variation>
    <location>
        <position position="161"/>
    </location>
</feature>
<feature type="sequence conflict" description="In Ref. 3; AAC52273." evidence="5" ref="3">
    <original>R</original>
    <variation>H</variation>
    <location>
        <position position="172"/>
    </location>
</feature>
<feature type="sequence conflict" description="In Ref. 2; AAH22176." evidence="5" ref="2">
    <original>F</original>
    <variation>L</variation>
    <location>
        <position position="184"/>
    </location>
</feature>
<accession>P48759</accession>
<accession>Q8VDF1</accession>
<evidence type="ECO:0000250" key="1"/>
<evidence type="ECO:0000255" key="2"/>
<evidence type="ECO:0000255" key="3">
    <source>
        <dbReference type="PROSITE-ProRule" id="PRU01172"/>
    </source>
</evidence>
<evidence type="ECO:0000269" key="4">
    <source>
    </source>
</evidence>
<evidence type="ECO:0000305" key="5"/>
<sequence>MHLPAILLCALWSAVVAETSDDYELMYVNLDNEIDNGLHPTEDPTPCDCRQEHSEWDKLFIMLENSQMREGMLLQATDDVLRGELQRLRAELGRLAGGMARPCAAGGPADARLVRALEPLLQESRDASLRLARLEDAEARRPEATVPGLGAVLEELRRTRADLSAVQSWVARHWLPAGCETAIFFPMRSKKIFGSVHPVRPMKLESFSTCIWVKATDVLNKTILFSYGTKWNPYEIQLYLSSQSLVLVVGGKENKLAADTVVSLGRWSHLCGTWSSEQGSMSLWANGELVATTVEMAKSHSVPEGGLLQIGQEKNGCCVGGGFDESLAFSGRITGFNIWDRVLSEEEIRASGGVESCHIRGNVVGWGVTEIQAHGGAQYVS</sequence>